<protein>
    <recommendedName>
        <fullName evidence="1">Deoxyuridine 5'-triphosphate nucleotidohydrolase</fullName>
        <shortName evidence="1">dUTPase</shortName>
        <ecNumber evidence="1">3.6.1.23</ecNumber>
    </recommendedName>
    <alternativeName>
        <fullName evidence="1">dUTP pyrophosphatase</fullName>
    </alternativeName>
</protein>
<keyword id="KW-0378">Hydrolase</keyword>
<keyword id="KW-0460">Magnesium</keyword>
<keyword id="KW-0479">Metal-binding</keyword>
<keyword id="KW-0546">Nucleotide metabolism</keyword>
<comment type="function">
    <text evidence="1">This enzyme is involved in nucleotide metabolism: it produces dUMP, the immediate precursor of thymidine nucleotides and it decreases the intracellular concentration of dUTP so that uracil cannot be incorporated into DNA.</text>
</comment>
<comment type="catalytic activity">
    <reaction evidence="1">
        <text>dUTP + H2O = dUMP + diphosphate + H(+)</text>
        <dbReference type="Rhea" id="RHEA:10248"/>
        <dbReference type="ChEBI" id="CHEBI:15377"/>
        <dbReference type="ChEBI" id="CHEBI:15378"/>
        <dbReference type="ChEBI" id="CHEBI:33019"/>
        <dbReference type="ChEBI" id="CHEBI:61555"/>
        <dbReference type="ChEBI" id="CHEBI:246422"/>
        <dbReference type="EC" id="3.6.1.23"/>
    </reaction>
</comment>
<comment type="cofactor">
    <cofactor evidence="1">
        <name>Mg(2+)</name>
        <dbReference type="ChEBI" id="CHEBI:18420"/>
    </cofactor>
</comment>
<comment type="pathway">
    <text evidence="1">Pyrimidine metabolism; dUMP biosynthesis; dUMP from dCTP (dUTP route): step 2/2.</text>
</comment>
<comment type="similarity">
    <text evidence="1">Belongs to the dUTPase family.</text>
</comment>
<evidence type="ECO:0000255" key="1">
    <source>
        <dbReference type="HAMAP-Rule" id="MF_00116"/>
    </source>
</evidence>
<accession>B0VTE5</accession>
<feature type="chain" id="PRO_1000094936" description="Deoxyuridine 5'-triphosphate nucleotidohydrolase">
    <location>
        <begin position="1"/>
        <end position="150"/>
    </location>
</feature>
<feature type="binding site" evidence="1">
    <location>
        <begin position="69"/>
        <end position="71"/>
    </location>
    <ligand>
        <name>substrate</name>
    </ligand>
</feature>
<feature type="binding site" evidence="1">
    <location>
        <position position="82"/>
    </location>
    <ligand>
        <name>substrate</name>
    </ligand>
</feature>
<feature type="binding site" evidence="1">
    <location>
        <begin position="86"/>
        <end position="88"/>
    </location>
    <ligand>
        <name>substrate</name>
    </ligand>
</feature>
<feature type="binding site" evidence="1">
    <location>
        <position position="96"/>
    </location>
    <ligand>
        <name>substrate</name>
    </ligand>
</feature>
<dbReference type="EC" id="3.6.1.23" evidence="1"/>
<dbReference type="EMBL" id="CU468230">
    <property type="protein sequence ID" value="CAP01860.1"/>
    <property type="molecule type" value="Genomic_DNA"/>
</dbReference>
<dbReference type="SMR" id="B0VTE5"/>
<dbReference type="KEGG" id="abm:ABSDF2550"/>
<dbReference type="HOGENOM" id="CLU_068508_1_1_6"/>
<dbReference type="UniPathway" id="UPA00610">
    <property type="reaction ID" value="UER00666"/>
</dbReference>
<dbReference type="Proteomes" id="UP000001741">
    <property type="component" value="Chromosome"/>
</dbReference>
<dbReference type="GO" id="GO:0004170">
    <property type="term" value="F:dUTP diphosphatase activity"/>
    <property type="evidence" value="ECO:0007669"/>
    <property type="project" value="UniProtKB-UniRule"/>
</dbReference>
<dbReference type="GO" id="GO:0000287">
    <property type="term" value="F:magnesium ion binding"/>
    <property type="evidence" value="ECO:0007669"/>
    <property type="project" value="UniProtKB-UniRule"/>
</dbReference>
<dbReference type="GO" id="GO:0006226">
    <property type="term" value="P:dUMP biosynthetic process"/>
    <property type="evidence" value="ECO:0007669"/>
    <property type="project" value="UniProtKB-UniRule"/>
</dbReference>
<dbReference type="GO" id="GO:0046081">
    <property type="term" value="P:dUTP catabolic process"/>
    <property type="evidence" value="ECO:0007669"/>
    <property type="project" value="InterPro"/>
</dbReference>
<dbReference type="CDD" id="cd07557">
    <property type="entry name" value="trimeric_dUTPase"/>
    <property type="match status" value="1"/>
</dbReference>
<dbReference type="FunFam" id="2.70.40.10:FF:000002">
    <property type="entry name" value="dUTP diphosphatase"/>
    <property type="match status" value="1"/>
</dbReference>
<dbReference type="Gene3D" id="2.70.40.10">
    <property type="match status" value="1"/>
</dbReference>
<dbReference type="HAMAP" id="MF_00116">
    <property type="entry name" value="dUTPase_bact"/>
    <property type="match status" value="1"/>
</dbReference>
<dbReference type="InterPro" id="IPR008181">
    <property type="entry name" value="dUTPase"/>
</dbReference>
<dbReference type="InterPro" id="IPR029054">
    <property type="entry name" value="dUTPase-like"/>
</dbReference>
<dbReference type="InterPro" id="IPR036157">
    <property type="entry name" value="dUTPase-like_sf"/>
</dbReference>
<dbReference type="InterPro" id="IPR033704">
    <property type="entry name" value="dUTPase_trimeric"/>
</dbReference>
<dbReference type="NCBIfam" id="TIGR00576">
    <property type="entry name" value="dut"/>
    <property type="match status" value="1"/>
</dbReference>
<dbReference type="NCBIfam" id="NF001862">
    <property type="entry name" value="PRK00601.1"/>
    <property type="match status" value="1"/>
</dbReference>
<dbReference type="PANTHER" id="PTHR11241">
    <property type="entry name" value="DEOXYURIDINE 5'-TRIPHOSPHATE NUCLEOTIDOHYDROLASE"/>
    <property type="match status" value="1"/>
</dbReference>
<dbReference type="PANTHER" id="PTHR11241:SF0">
    <property type="entry name" value="DEOXYURIDINE 5'-TRIPHOSPHATE NUCLEOTIDOHYDROLASE"/>
    <property type="match status" value="1"/>
</dbReference>
<dbReference type="Pfam" id="PF00692">
    <property type="entry name" value="dUTPase"/>
    <property type="match status" value="1"/>
</dbReference>
<dbReference type="SUPFAM" id="SSF51283">
    <property type="entry name" value="dUTPase-like"/>
    <property type="match status" value="1"/>
</dbReference>
<proteinExistence type="inferred from homology"/>
<organism>
    <name type="scientific">Acinetobacter baumannii (strain SDF)</name>
    <dbReference type="NCBI Taxonomy" id="509170"/>
    <lineage>
        <taxon>Bacteria</taxon>
        <taxon>Pseudomonadati</taxon>
        <taxon>Pseudomonadota</taxon>
        <taxon>Gammaproteobacteria</taxon>
        <taxon>Moraxellales</taxon>
        <taxon>Moraxellaceae</taxon>
        <taxon>Acinetobacter</taxon>
        <taxon>Acinetobacter calcoaceticus/baumannii complex</taxon>
    </lineage>
</organism>
<gene>
    <name evidence="1" type="primary">dut</name>
    <name type="ordered locus">ABSDF2550</name>
</gene>
<name>DUT_ACIBS</name>
<reference key="1">
    <citation type="journal article" date="2008" name="PLoS ONE">
        <title>Comparative analysis of Acinetobacters: three genomes for three lifestyles.</title>
        <authorList>
            <person name="Vallenet D."/>
            <person name="Nordmann P."/>
            <person name="Barbe V."/>
            <person name="Poirel L."/>
            <person name="Mangenot S."/>
            <person name="Bataille E."/>
            <person name="Dossat C."/>
            <person name="Gas S."/>
            <person name="Kreimeyer A."/>
            <person name="Lenoble P."/>
            <person name="Oztas S."/>
            <person name="Poulain J."/>
            <person name="Segurens B."/>
            <person name="Robert C."/>
            <person name="Abergel C."/>
            <person name="Claverie J.-M."/>
            <person name="Raoult D."/>
            <person name="Medigue C."/>
            <person name="Weissenbach J."/>
            <person name="Cruveiller S."/>
        </authorList>
    </citation>
    <scope>NUCLEOTIDE SEQUENCE [LARGE SCALE GENOMIC DNA]</scope>
    <source>
        <strain>SDF</strain>
    </source>
</reference>
<sequence length="150" mass="16371">MKVQVKLLDPRLGKEWPLPSYATAGSAGLDLRACLDEAIEIEPGQTVLVKTGMAIYIHDVNFAGLILPRSGLGHKHGIVLGNLVGLIDSDYQGELMVSVWNRGQTTFRLEPGERLAQYVLVPVVQAEFEQVEEFEETLRGAGGFGHTGKQ</sequence>